<organismHost>
    <name type="scientific">Mus musculus domesticus</name>
    <name type="common">western European house mouse</name>
    <dbReference type="NCBI Taxonomy" id="10092"/>
</organismHost>
<dbReference type="EMBL" id="M55296">
    <property type="protein sequence ID" value="AAA46271.1"/>
    <property type="molecule type" value="Genomic_RNA"/>
</dbReference>
<dbReference type="GO" id="GO:0016020">
    <property type="term" value="C:membrane"/>
    <property type="evidence" value="ECO:0007669"/>
    <property type="project" value="UniProtKB-KW"/>
</dbReference>
<dbReference type="GO" id="GO:0019031">
    <property type="term" value="C:viral envelope"/>
    <property type="evidence" value="ECO:0007669"/>
    <property type="project" value="UniProtKB-KW"/>
</dbReference>
<dbReference type="GO" id="GO:0055036">
    <property type="term" value="C:virion membrane"/>
    <property type="evidence" value="ECO:0007669"/>
    <property type="project" value="UniProtKB-SubCell"/>
</dbReference>
<dbReference type="InterPro" id="IPR001332">
    <property type="entry name" value="Arteri_GP5"/>
</dbReference>
<dbReference type="Pfam" id="PF00951">
    <property type="entry name" value="Arteri_Gl"/>
    <property type="match status" value="1"/>
</dbReference>
<comment type="subcellular location">
    <subcellularLocation>
        <location evidence="2">Virion membrane</location>
        <topology evidence="2">Multi-pass membrane protein</topology>
    </subcellularLocation>
</comment>
<sequence length="171" mass="18893">MGGLEFCDQTSWYQIFIAFSLTYTPIAIYSLKVFRGTLAGIVNIFIFINCCVSFVYLMYHHSVTNTIALSLGAVIALVWGIYTLVKIVDWLVIRCRLCFLGRSYILAPPSHVDTSDGRQSLTTSLTTAFVVRKPGSTLVNGQLVPDFQRLVLGGKKAVSKGAVNLLKYVSK</sequence>
<accession>P0C781</accession>
<accession>P24123</accession>
<keyword id="KW-0472">Membrane</keyword>
<keyword id="KW-0812">Transmembrane</keyword>
<keyword id="KW-1133">Transmembrane helix</keyword>
<keyword id="KW-0261">Viral envelope protein</keyword>
<keyword id="KW-0946">Virion</keyword>
<name>VPX_LDV</name>
<evidence type="ECO:0000255" key="1"/>
<evidence type="ECO:0000305" key="2"/>
<proteinExistence type="predicted"/>
<gene>
    <name type="primary">VPX</name>
</gene>
<reference key="1">
    <citation type="journal article" date="1990" name="Virology">
        <title>Map location of lactate dehydrogenase-elevating virus (LDV) capsid protein (Vp1) gene.</title>
        <authorList>
            <person name="Godeny E.K."/>
            <person name="Speicher D.W."/>
            <person name="Brinton M.A."/>
        </authorList>
    </citation>
    <scope>NUCLEOTIDE SEQUENCE [GENOMIC RNA]</scope>
</reference>
<protein>
    <recommendedName>
        <fullName>Protein X</fullName>
    </recommendedName>
    <alternativeName>
        <fullName>Envelope protein</fullName>
    </alternativeName>
    <alternativeName>
        <fullName>VpX</fullName>
    </alternativeName>
</protein>
<organism>
    <name type="scientific">Lactate dehydrogenase-elevating virus</name>
    <name type="common">LDV</name>
    <dbReference type="NCBI Taxonomy" id="11048"/>
    <lineage>
        <taxon>Viruses</taxon>
        <taxon>Riboviria</taxon>
        <taxon>Orthornavirae</taxon>
        <taxon>Pisuviricota</taxon>
        <taxon>Pisoniviricetes</taxon>
        <taxon>Nidovirales</taxon>
        <taxon>Arnidovirineae</taxon>
        <taxon>Arteriviridae</taxon>
        <taxon>Variarterivirinae</taxon>
        <taxon>Gammaarterivirus</taxon>
        <taxon>Gammaarterivirus lacdeh</taxon>
    </lineage>
</organism>
<feature type="chain" id="PRO_0000080884" description="Protein X">
    <location>
        <begin position="1"/>
        <end position="171"/>
    </location>
</feature>
<feature type="transmembrane region" description="Helical" evidence="1">
    <location>
        <begin position="11"/>
        <end position="31"/>
    </location>
</feature>
<feature type="transmembrane region" description="Helical" evidence="1">
    <location>
        <begin position="38"/>
        <end position="58"/>
    </location>
</feature>
<feature type="transmembrane region" description="Helical" evidence="1">
    <location>
        <begin position="73"/>
        <end position="93"/>
    </location>
</feature>